<reference key="1">
    <citation type="journal article" date="2006" name="PLoS Genet.">
        <title>Genome sequence of Rickettsia bellii illuminates the role of amoebae in gene exchanges between intracellular pathogens.</title>
        <authorList>
            <person name="Ogata H."/>
            <person name="La Scola B."/>
            <person name="Audic S."/>
            <person name="Renesto P."/>
            <person name="Blanc G."/>
            <person name="Robert C."/>
            <person name="Fournier P.-E."/>
            <person name="Claverie J.-M."/>
            <person name="Raoult D."/>
        </authorList>
    </citation>
    <scope>NUCLEOTIDE SEQUENCE [LARGE SCALE GENOMIC DNA]</scope>
    <source>
        <strain>RML369-C</strain>
    </source>
</reference>
<proteinExistence type="predicted"/>
<feature type="chain" id="PRO_0000280918" description="Putative ankyrin repeat protein RBE_0902">
    <location>
        <begin position="1"/>
        <end position="559"/>
    </location>
</feature>
<feature type="repeat" description="ANK 1">
    <location>
        <begin position="11"/>
        <end position="40"/>
    </location>
</feature>
<feature type="repeat" description="ANK 2">
    <location>
        <begin position="46"/>
        <end position="75"/>
    </location>
</feature>
<feature type="repeat" description="ANK 3">
    <location>
        <begin position="81"/>
        <end position="110"/>
    </location>
</feature>
<feature type="repeat" description="ANK 4">
    <location>
        <begin position="158"/>
        <end position="189"/>
    </location>
</feature>
<feature type="repeat" description="ANK 5">
    <location>
        <begin position="228"/>
        <end position="257"/>
    </location>
</feature>
<feature type="repeat" description="ANK 6">
    <location>
        <begin position="263"/>
        <end position="292"/>
    </location>
</feature>
<feature type="repeat" description="ANK 7">
    <location>
        <begin position="298"/>
        <end position="327"/>
    </location>
</feature>
<feature type="repeat" description="ANK 8">
    <location>
        <begin position="333"/>
        <end position="364"/>
    </location>
</feature>
<feature type="repeat" description="ANK 9">
    <location>
        <begin position="372"/>
        <end position="402"/>
    </location>
</feature>
<feature type="repeat" description="ANK 10">
    <location>
        <begin position="524"/>
        <end position="554"/>
    </location>
</feature>
<gene>
    <name type="ordered locus">RBE_0902</name>
</gene>
<dbReference type="EMBL" id="CP000087">
    <property type="protein sequence ID" value="ABE04983.1"/>
    <property type="molecule type" value="Genomic_DNA"/>
</dbReference>
<dbReference type="RefSeq" id="WP_011477566.1">
    <property type="nucleotide sequence ID" value="NC_007940.1"/>
</dbReference>
<dbReference type="SMR" id="Q1RI31"/>
<dbReference type="KEGG" id="rbe:RBE_0902"/>
<dbReference type="eggNOG" id="COG0666">
    <property type="taxonomic scope" value="Bacteria"/>
</dbReference>
<dbReference type="HOGENOM" id="CLU_487356_0_0_5"/>
<dbReference type="Proteomes" id="UP000001951">
    <property type="component" value="Chromosome"/>
</dbReference>
<dbReference type="Gene3D" id="1.25.40.20">
    <property type="entry name" value="Ankyrin repeat-containing domain"/>
    <property type="match status" value="4"/>
</dbReference>
<dbReference type="InterPro" id="IPR002110">
    <property type="entry name" value="Ankyrin_rpt"/>
</dbReference>
<dbReference type="InterPro" id="IPR036770">
    <property type="entry name" value="Ankyrin_rpt-contain_sf"/>
</dbReference>
<dbReference type="PANTHER" id="PTHR24198">
    <property type="entry name" value="ANKYRIN REPEAT AND PROTEIN KINASE DOMAIN-CONTAINING PROTEIN"/>
    <property type="match status" value="1"/>
</dbReference>
<dbReference type="PANTHER" id="PTHR24198:SF165">
    <property type="entry name" value="ANKYRIN REPEAT-CONTAINING PROTEIN-RELATED"/>
    <property type="match status" value="1"/>
</dbReference>
<dbReference type="Pfam" id="PF12796">
    <property type="entry name" value="Ank_2"/>
    <property type="match status" value="3"/>
</dbReference>
<dbReference type="SMART" id="SM00248">
    <property type="entry name" value="ANK"/>
    <property type="match status" value="10"/>
</dbReference>
<dbReference type="SUPFAM" id="SSF48403">
    <property type="entry name" value="Ankyrin repeat"/>
    <property type="match status" value="1"/>
</dbReference>
<dbReference type="PROSITE" id="PS50297">
    <property type="entry name" value="ANK_REP_REGION"/>
    <property type="match status" value="1"/>
</dbReference>
<keyword id="KW-0040">ANK repeat</keyword>
<keyword id="KW-0677">Repeat</keyword>
<organism>
    <name type="scientific">Rickettsia bellii (strain RML369-C)</name>
    <dbReference type="NCBI Taxonomy" id="336407"/>
    <lineage>
        <taxon>Bacteria</taxon>
        <taxon>Pseudomonadati</taxon>
        <taxon>Pseudomonadota</taxon>
        <taxon>Alphaproteobacteria</taxon>
        <taxon>Rickettsiales</taxon>
        <taxon>Rickettsiaceae</taxon>
        <taxon>Rickettsieae</taxon>
        <taxon>Rickettsia</taxon>
        <taxon>belli group</taxon>
    </lineage>
</organism>
<sequence length="559" mass="62173">MDTAELSKVDDGWTVLTFAAAYGLEKVCEALIPKMSEQAINHVDKDGNTALTWAAYTGLEKVCEALIPKMSDQAINHVNSDGNTALSIARNKGFKNMCDLLTTIEATKQNEIQTNLKLTTTKTSHEKLIEAIEARNEAEAQNLIVHMDTAELSKVNNDDWTALTFAAAYGLEKVCELLIPKMTDQVINHVDKDGDTALTWAASSGLEKICEALIPKMTEQTINQLTDNNDTVLTLAANKSLGKICEILIPKMTDQAINQVNKDGNTALIAAASSHLEKICEALIPKMSDQAINHINNYGNTALIAAASSGLEKVCETLIPKMTEQAINQANHQCDTALIFAVRNSLKKVCEVLIPKMSYEAINCWSTNSFWFGFTAFTWVTLNGDKKICELLIPKTSPEVIIDILKLTKEKQFIIEAINSCNKTSPEVIINILKLAKEKQFMIEAINNYNNKLVKELNLILDENNPNNAIKMIRAVKIYKKLFKEYLTVEKTENFKPLQNTIEDFIKNNFFTAAGVCKNLIPKIDNNEIHISCLTTEIIAHIVEYLENEKWGLEVETLG</sequence>
<protein>
    <recommendedName>
        <fullName>Putative ankyrin repeat protein RBE_0902</fullName>
    </recommendedName>
</protein>
<name>Y902_RICBR</name>
<accession>Q1RI31</accession>